<proteinExistence type="inferred from homology"/>
<comment type="catalytic activity">
    <reaction evidence="1">
        <text>tRNA(Lys) + L-lysine + ATP = L-lysyl-tRNA(Lys) + AMP + diphosphate</text>
        <dbReference type="Rhea" id="RHEA:20792"/>
        <dbReference type="Rhea" id="RHEA-COMP:9696"/>
        <dbReference type="Rhea" id="RHEA-COMP:9697"/>
        <dbReference type="ChEBI" id="CHEBI:30616"/>
        <dbReference type="ChEBI" id="CHEBI:32551"/>
        <dbReference type="ChEBI" id="CHEBI:33019"/>
        <dbReference type="ChEBI" id="CHEBI:78442"/>
        <dbReference type="ChEBI" id="CHEBI:78529"/>
        <dbReference type="ChEBI" id="CHEBI:456215"/>
        <dbReference type="EC" id="6.1.1.6"/>
    </reaction>
</comment>
<comment type="cofactor">
    <cofactor evidence="1">
        <name>Mg(2+)</name>
        <dbReference type="ChEBI" id="CHEBI:18420"/>
    </cofactor>
    <text evidence="1">Binds 3 Mg(2+) ions per subunit.</text>
</comment>
<comment type="subunit">
    <text evidence="1">Homodimer.</text>
</comment>
<comment type="subcellular location">
    <subcellularLocation>
        <location evidence="1">Cytoplasm</location>
    </subcellularLocation>
</comment>
<comment type="similarity">
    <text evidence="1">Belongs to the class-II aminoacyl-tRNA synthetase family.</text>
</comment>
<name>SYK_LEGPH</name>
<organism>
    <name type="scientific">Legionella pneumophila subsp. pneumophila (strain Philadelphia 1 / ATCC 33152 / DSM 7513)</name>
    <dbReference type="NCBI Taxonomy" id="272624"/>
    <lineage>
        <taxon>Bacteria</taxon>
        <taxon>Pseudomonadati</taxon>
        <taxon>Pseudomonadota</taxon>
        <taxon>Gammaproteobacteria</taxon>
        <taxon>Legionellales</taxon>
        <taxon>Legionellaceae</taxon>
        <taxon>Legionella</taxon>
    </lineage>
</organism>
<dbReference type="EC" id="6.1.1.6" evidence="1"/>
<dbReference type="EMBL" id="AE017354">
    <property type="protein sequence ID" value="AAU27856.1"/>
    <property type="molecule type" value="Genomic_DNA"/>
</dbReference>
<dbReference type="RefSeq" id="WP_010947503.1">
    <property type="nucleotide sequence ID" value="NC_002942.5"/>
</dbReference>
<dbReference type="RefSeq" id="YP_095803.1">
    <property type="nucleotide sequence ID" value="NC_002942.5"/>
</dbReference>
<dbReference type="SMR" id="Q5ZUL6"/>
<dbReference type="STRING" id="272624.lpg1777"/>
<dbReference type="PaxDb" id="272624-lpg1777"/>
<dbReference type="GeneID" id="57035766"/>
<dbReference type="KEGG" id="lpn:lpg1777"/>
<dbReference type="PATRIC" id="fig|272624.6.peg.1862"/>
<dbReference type="eggNOG" id="COG1190">
    <property type="taxonomic scope" value="Bacteria"/>
</dbReference>
<dbReference type="HOGENOM" id="CLU_008255_6_0_6"/>
<dbReference type="OrthoDB" id="9802326at2"/>
<dbReference type="Proteomes" id="UP000000609">
    <property type="component" value="Chromosome"/>
</dbReference>
<dbReference type="GO" id="GO:0005829">
    <property type="term" value="C:cytosol"/>
    <property type="evidence" value="ECO:0007669"/>
    <property type="project" value="TreeGrafter"/>
</dbReference>
<dbReference type="GO" id="GO:0005524">
    <property type="term" value="F:ATP binding"/>
    <property type="evidence" value="ECO:0007669"/>
    <property type="project" value="UniProtKB-UniRule"/>
</dbReference>
<dbReference type="GO" id="GO:0004824">
    <property type="term" value="F:lysine-tRNA ligase activity"/>
    <property type="evidence" value="ECO:0007669"/>
    <property type="project" value="UniProtKB-UniRule"/>
</dbReference>
<dbReference type="GO" id="GO:0000287">
    <property type="term" value="F:magnesium ion binding"/>
    <property type="evidence" value="ECO:0007669"/>
    <property type="project" value="UniProtKB-UniRule"/>
</dbReference>
<dbReference type="GO" id="GO:0000049">
    <property type="term" value="F:tRNA binding"/>
    <property type="evidence" value="ECO:0007669"/>
    <property type="project" value="TreeGrafter"/>
</dbReference>
<dbReference type="GO" id="GO:0006430">
    <property type="term" value="P:lysyl-tRNA aminoacylation"/>
    <property type="evidence" value="ECO:0007669"/>
    <property type="project" value="UniProtKB-UniRule"/>
</dbReference>
<dbReference type="CDD" id="cd00775">
    <property type="entry name" value="LysRS_core"/>
    <property type="match status" value="1"/>
</dbReference>
<dbReference type="CDD" id="cd04322">
    <property type="entry name" value="LysRS_N"/>
    <property type="match status" value="1"/>
</dbReference>
<dbReference type="FunFam" id="2.40.50.140:FF:000024">
    <property type="entry name" value="Lysine--tRNA ligase"/>
    <property type="match status" value="1"/>
</dbReference>
<dbReference type="FunFam" id="3.30.930.10:FF:000001">
    <property type="entry name" value="Lysine--tRNA ligase"/>
    <property type="match status" value="1"/>
</dbReference>
<dbReference type="Gene3D" id="3.30.930.10">
    <property type="entry name" value="Bira Bifunctional Protein, Domain 2"/>
    <property type="match status" value="1"/>
</dbReference>
<dbReference type="Gene3D" id="2.40.50.140">
    <property type="entry name" value="Nucleic acid-binding proteins"/>
    <property type="match status" value="1"/>
</dbReference>
<dbReference type="HAMAP" id="MF_00252">
    <property type="entry name" value="Lys_tRNA_synth_class2"/>
    <property type="match status" value="1"/>
</dbReference>
<dbReference type="InterPro" id="IPR004364">
    <property type="entry name" value="Aa-tRNA-synt_II"/>
</dbReference>
<dbReference type="InterPro" id="IPR006195">
    <property type="entry name" value="aa-tRNA-synth_II"/>
</dbReference>
<dbReference type="InterPro" id="IPR045864">
    <property type="entry name" value="aa-tRNA-synth_II/BPL/LPL"/>
</dbReference>
<dbReference type="InterPro" id="IPR002313">
    <property type="entry name" value="Lys-tRNA-ligase_II"/>
</dbReference>
<dbReference type="InterPro" id="IPR044136">
    <property type="entry name" value="Lys-tRNA-ligase_II_N"/>
</dbReference>
<dbReference type="InterPro" id="IPR018149">
    <property type="entry name" value="Lys-tRNA-synth_II_C"/>
</dbReference>
<dbReference type="InterPro" id="IPR012340">
    <property type="entry name" value="NA-bd_OB-fold"/>
</dbReference>
<dbReference type="InterPro" id="IPR004365">
    <property type="entry name" value="NA-bd_OB_tRNA"/>
</dbReference>
<dbReference type="NCBIfam" id="TIGR00499">
    <property type="entry name" value="lysS_bact"/>
    <property type="match status" value="1"/>
</dbReference>
<dbReference type="NCBIfam" id="NF001756">
    <property type="entry name" value="PRK00484.1"/>
    <property type="match status" value="1"/>
</dbReference>
<dbReference type="PANTHER" id="PTHR42918:SF15">
    <property type="entry name" value="LYSINE--TRNA LIGASE, CHLOROPLASTIC_MITOCHONDRIAL"/>
    <property type="match status" value="1"/>
</dbReference>
<dbReference type="PANTHER" id="PTHR42918">
    <property type="entry name" value="LYSYL-TRNA SYNTHETASE"/>
    <property type="match status" value="1"/>
</dbReference>
<dbReference type="Pfam" id="PF00152">
    <property type="entry name" value="tRNA-synt_2"/>
    <property type="match status" value="1"/>
</dbReference>
<dbReference type="Pfam" id="PF01336">
    <property type="entry name" value="tRNA_anti-codon"/>
    <property type="match status" value="1"/>
</dbReference>
<dbReference type="PRINTS" id="PR00982">
    <property type="entry name" value="TRNASYNTHLYS"/>
</dbReference>
<dbReference type="SUPFAM" id="SSF55681">
    <property type="entry name" value="Class II aaRS and biotin synthetases"/>
    <property type="match status" value="1"/>
</dbReference>
<dbReference type="SUPFAM" id="SSF50249">
    <property type="entry name" value="Nucleic acid-binding proteins"/>
    <property type="match status" value="1"/>
</dbReference>
<dbReference type="PROSITE" id="PS50862">
    <property type="entry name" value="AA_TRNA_LIGASE_II"/>
    <property type="match status" value="1"/>
</dbReference>
<feature type="chain" id="PRO_1000012884" description="Lysine--tRNA ligase">
    <location>
        <begin position="1"/>
        <end position="496"/>
    </location>
</feature>
<feature type="binding site" evidence="1">
    <location>
        <position position="408"/>
    </location>
    <ligand>
        <name>Mg(2+)</name>
        <dbReference type="ChEBI" id="CHEBI:18420"/>
        <label>1</label>
    </ligand>
</feature>
<feature type="binding site" evidence="1">
    <location>
        <position position="415"/>
    </location>
    <ligand>
        <name>Mg(2+)</name>
        <dbReference type="ChEBI" id="CHEBI:18420"/>
        <label>1</label>
    </ligand>
</feature>
<feature type="binding site" evidence="1">
    <location>
        <position position="415"/>
    </location>
    <ligand>
        <name>Mg(2+)</name>
        <dbReference type="ChEBI" id="CHEBI:18420"/>
        <label>2</label>
    </ligand>
</feature>
<gene>
    <name evidence="1" type="primary">lysS</name>
    <name type="ordered locus">lpg1777</name>
</gene>
<evidence type="ECO:0000255" key="1">
    <source>
        <dbReference type="HAMAP-Rule" id="MF_00252"/>
    </source>
</evidence>
<protein>
    <recommendedName>
        <fullName evidence="1">Lysine--tRNA ligase</fullName>
        <ecNumber evidence="1">6.1.1.6</ecNumber>
    </recommendedName>
    <alternativeName>
        <fullName evidence="1">Lysyl-tRNA synthetase</fullName>
        <shortName evidence="1">LysRS</shortName>
    </alternativeName>
</protein>
<sequence length="496" mass="57857">MSEEHVHLDESEVYHIRKQKLAELRTGGFNFPNTFRREHLADALLKQYSETEKQTLEQKHVKVSVAGRIVLRRIMGKASFFHIQDVSGRIQVYLRSNDLPDIYEQFKHWDLGDIVGVQGELFKTNTGELTINAEHVELLTKSLRPLPDKFHGLADQELKYRKRYVDLIANEDSRKTFLIRSHLIKAFREFMDDNHFLEVETPMMHPIPGGALARPFVTHHNTLDMTMYLRIAPELYLKRLVVGGFERVYEINRNFRNEGISTRHNPEFTMLEFYQAYADYNDLMNFTEQLFHYLCDKVLATRQIEYQGQVIDFNKPFERLSVKEAILKYHPDIKAQQLETVEGCRTLLNDLGLPYKETDGLGKLQIILFEETVEHQLFQPTFITEYPTEISPLARRSDTNPEVTDRFEFFIAGREIANGFSELNDAEDQAERFRKQVEEKDAGDLEAMHFDSDYIEALEYGLPPTAGEGIGIDRLVMLFTNSQSIRDVILFPHLRQ</sequence>
<reference key="1">
    <citation type="journal article" date="2004" name="Science">
        <title>The genomic sequence of the accidental pathogen Legionella pneumophila.</title>
        <authorList>
            <person name="Chien M."/>
            <person name="Morozova I."/>
            <person name="Shi S."/>
            <person name="Sheng H."/>
            <person name="Chen J."/>
            <person name="Gomez S.M."/>
            <person name="Asamani G."/>
            <person name="Hill K."/>
            <person name="Nuara J."/>
            <person name="Feder M."/>
            <person name="Rineer J."/>
            <person name="Greenberg J.J."/>
            <person name="Steshenko V."/>
            <person name="Park S.H."/>
            <person name="Zhao B."/>
            <person name="Teplitskaya E."/>
            <person name="Edwards J.R."/>
            <person name="Pampou S."/>
            <person name="Georghiou A."/>
            <person name="Chou I.-C."/>
            <person name="Iannuccilli W."/>
            <person name="Ulz M.E."/>
            <person name="Kim D.H."/>
            <person name="Geringer-Sameth A."/>
            <person name="Goldsberry C."/>
            <person name="Morozov P."/>
            <person name="Fischer S.G."/>
            <person name="Segal G."/>
            <person name="Qu X."/>
            <person name="Rzhetsky A."/>
            <person name="Zhang P."/>
            <person name="Cayanis E."/>
            <person name="De Jong P.J."/>
            <person name="Ju J."/>
            <person name="Kalachikov S."/>
            <person name="Shuman H.A."/>
            <person name="Russo J.J."/>
        </authorList>
    </citation>
    <scope>NUCLEOTIDE SEQUENCE [LARGE SCALE GENOMIC DNA]</scope>
    <source>
        <strain>Philadelphia 1 / ATCC 33152 / DSM 7513</strain>
    </source>
</reference>
<accession>Q5ZUL6</accession>
<keyword id="KW-0030">Aminoacyl-tRNA synthetase</keyword>
<keyword id="KW-0067">ATP-binding</keyword>
<keyword id="KW-0963">Cytoplasm</keyword>
<keyword id="KW-0436">Ligase</keyword>
<keyword id="KW-0460">Magnesium</keyword>
<keyword id="KW-0479">Metal-binding</keyword>
<keyword id="KW-0547">Nucleotide-binding</keyword>
<keyword id="KW-0648">Protein biosynthesis</keyword>
<keyword id="KW-1185">Reference proteome</keyword>